<sequence length="92" mass="10389">MEKSDRRSEESHLWIPLQCLDQTLRAILKCLGLFHQDSPTTSSPGTSKQPKEEKEDVTMEKEEVVVTSRATKVKAKQRGKEKVSSGRPGQHN</sequence>
<feature type="propeptide" id="PRO_0000249079" evidence="3">
    <location>
        <begin position="1"/>
        <end position="69"/>
    </location>
</feature>
<feature type="peptide" id="PRO_0000249080" description="Elicitor peptide 1">
    <location>
        <begin position="70"/>
        <end position="92"/>
    </location>
</feature>
<feature type="region of interest" description="Disordered" evidence="1">
    <location>
        <begin position="35"/>
        <end position="92"/>
    </location>
</feature>
<feature type="compositionally biased region" description="Polar residues" evidence="1">
    <location>
        <begin position="37"/>
        <end position="48"/>
    </location>
</feature>
<feature type="compositionally biased region" description="Basic and acidic residues" evidence="1">
    <location>
        <begin position="49"/>
        <end position="64"/>
    </location>
</feature>
<feature type="site" description="Required for ligand-receptor interaction">
    <location>
        <position position="86"/>
    </location>
</feature>
<feature type="mutagenesis site" description="No effect." evidence="4">
    <original>R</original>
    <variation>A</variation>
    <location>
        <position position="78"/>
    </location>
</feature>
<feature type="mutagenesis site" description="No effect." evidence="4">
    <original>G</original>
    <variation>A</variation>
    <location>
        <position position="79"/>
    </location>
</feature>
<feature type="mutagenesis site" description="No effect." evidence="4">
    <original>K</original>
    <variation>A</variation>
    <location>
        <position position="80"/>
    </location>
</feature>
<feature type="mutagenesis site" description="No effect." evidence="4">
    <original>E</original>
    <variation>A</variation>
    <location>
        <position position="81"/>
    </location>
</feature>
<feature type="mutagenesis site" description="No effect." evidence="4">
    <original>K</original>
    <variation>A</variation>
    <location>
        <position position="82"/>
    </location>
</feature>
<feature type="mutagenesis site" description="No effect." evidence="4">
    <original>V</original>
    <variation>A</variation>
    <location>
        <position position="83"/>
    </location>
</feature>
<feature type="mutagenesis site" description="Loss of binding to PEPR1 and of subsequent signaling." evidence="4">
    <original>S</original>
    <variation>A</variation>
    <location>
        <position position="84"/>
    </location>
</feature>
<feature type="mutagenesis site" description="No effect." evidence="4">
    <original>S</original>
    <variation>A</variation>
    <location>
        <position position="85"/>
    </location>
</feature>
<feature type="mutagenesis site" description="Loss of binding to PEPR1 and of subsequent signaling." evidence="4">
    <original>G</original>
    <variation>A</variation>
    <variation>P</variation>
    <location>
        <position position="86"/>
    </location>
</feature>
<feature type="mutagenesis site" description="No effect." evidence="4">
    <original>R</original>
    <variation>A</variation>
    <location>
        <position position="87"/>
    </location>
</feature>
<feature type="mutagenesis site" description="No effect." evidence="4">
    <original>P</original>
    <variation>A</variation>
    <location>
        <position position="88"/>
    </location>
</feature>
<feature type="mutagenesis site" description="No effect." evidence="4">
    <original>G</original>
    <variation>A</variation>
    <location>
        <position position="89"/>
    </location>
</feature>
<feature type="mutagenesis site" description="No effect." evidence="4">
    <original>Q</original>
    <variation>A</variation>
    <location>
        <position position="90"/>
    </location>
</feature>
<feature type="mutagenesis site" description="No effect." evidence="4">
    <original>H</original>
    <variation>A</variation>
    <location>
        <position position="91"/>
    </location>
</feature>
<feature type="mutagenesis site" description="No effect." evidence="4">
    <original>N</original>
    <variation>A</variation>
    <location>
        <position position="92"/>
    </location>
</feature>
<feature type="sequence conflict" description="In Ref. 4; AAM63605." evidence="9" ref="4">
    <original>E</original>
    <variation>G</variation>
    <location>
        <position position="10"/>
    </location>
</feature>
<feature type="sequence conflict" description="In Ref. 4; AAM63605." evidence="9" ref="4">
    <original>K</original>
    <variation>E</variation>
    <location>
        <position position="48"/>
    </location>
</feature>
<evidence type="ECO:0000256" key="1">
    <source>
        <dbReference type="SAM" id="MobiDB-lite"/>
    </source>
</evidence>
<evidence type="ECO:0000269" key="2">
    <source>
    </source>
</evidence>
<evidence type="ECO:0000269" key="3">
    <source>
    </source>
</evidence>
<evidence type="ECO:0000269" key="4">
    <source>
    </source>
</evidence>
<evidence type="ECO:0000269" key="5">
    <source>
    </source>
</evidence>
<evidence type="ECO:0000303" key="6">
    <source>
    </source>
</evidence>
<evidence type="ECO:0000303" key="7">
    <source>
    </source>
</evidence>
<evidence type="ECO:0000303" key="8">
    <source>
    </source>
</evidence>
<evidence type="ECO:0000305" key="9"/>
<evidence type="ECO:0000312" key="10">
    <source>
        <dbReference type="Araport" id="AT5G64900"/>
    </source>
</evidence>
<evidence type="ECO:0000312" key="11">
    <source>
        <dbReference type="EMBL" id="BAA97302.1"/>
    </source>
</evidence>
<organism>
    <name type="scientific">Arabidopsis thaliana</name>
    <name type="common">Mouse-ear cress</name>
    <dbReference type="NCBI Taxonomy" id="3702"/>
    <lineage>
        <taxon>Eukaryota</taxon>
        <taxon>Viridiplantae</taxon>
        <taxon>Streptophyta</taxon>
        <taxon>Embryophyta</taxon>
        <taxon>Tracheophyta</taxon>
        <taxon>Spermatophyta</taxon>
        <taxon>Magnoliopsida</taxon>
        <taxon>eudicotyledons</taxon>
        <taxon>Gunneridae</taxon>
        <taxon>Pentapetalae</taxon>
        <taxon>rosids</taxon>
        <taxon>malvids</taxon>
        <taxon>Brassicales</taxon>
        <taxon>Brassicaceae</taxon>
        <taxon>Camelineae</taxon>
        <taxon>Arabidopsis</taxon>
    </lineage>
</organism>
<proteinExistence type="evidence at protein level"/>
<reference key="1">
    <citation type="journal article" date="2000" name="DNA Res.">
        <title>Structural analysis of Arabidopsis thaliana chromosome 5. X. Sequence features of the regions of 3,076,755 bp covered by sixty P1 and TAC clones.</title>
        <authorList>
            <person name="Sato S."/>
            <person name="Nakamura Y."/>
            <person name="Kaneko T."/>
            <person name="Katoh T."/>
            <person name="Asamizu E."/>
            <person name="Kotani H."/>
            <person name="Tabata S."/>
        </authorList>
    </citation>
    <scope>NUCLEOTIDE SEQUENCE [LARGE SCALE GENOMIC DNA]</scope>
    <source>
        <strain>cv. Columbia</strain>
    </source>
</reference>
<reference key="2">
    <citation type="journal article" date="2017" name="Plant J.">
        <title>Araport11: a complete reannotation of the Arabidopsis thaliana reference genome.</title>
        <authorList>
            <person name="Cheng C.Y."/>
            <person name="Krishnakumar V."/>
            <person name="Chan A.P."/>
            <person name="Thibaud-Nissen F."/>
            <person name="Schobel S."/>
            <person name="Town C.D."/>
        </authorList>
    </citation>
    <scope>GENOME REANNOTATION</scope>
    <source>
        <strain>cv. Columbia</strain>
    </source>
</reference>
<reference key="3">
    <citation type="journal article" date="2003" name="Science">
        <title>Empirical analysis of transcriptional activity in the Arabidopsis genome.</title>
        <authorList>
            <person name="Yamada K."/>
            <person name="Lim J."/>
            <person name="Dale J.M."/>
            <person name="Chen H."/>
            <person name="Shinn P."/>
            <person name="Palm C.J."/>
            <person name="Southwick A.M."/>
            <person name="Wu H.C."/>
            <person name="Kim C.J."/>
            <person name="Nguyen M."/>
            <person name="Pham P.K."/>
            <person name="Cheuk R.F."/>
            <person name="Karlin-Newmann G."/>
            <person name="Liu S.X."/>
            <person name="Lam B."/>
            <person name="Sakano H."/>
            <person name="Wu T."/>
            <person name="Yu G."/>
            <person name="Miranda M."/>
            <person name="Quach H.L."/>
            <person name="Tripp M."/>
            <person name="Chang C.H."/>
            <person name="Lee J.M."/>
            <person name="Toriumi M.J."/>
            <person name="Chan M.M."/>
            <person name="Tang C.C."/>
            <person name="Onodera C.S."/>
            <person name="Deng J.M."/>
            <person name="Akiyama K."/>
            <person name="Ansari Y."/>
            <person name="Arakawa T."/>
            <person name="Banh J."/>
            <person name="Banno F."/>
            <person name="Bowser L."/>
            <person name="Brooks S.Y."/>
            <person name="Carninci P."/>
            <person name="Chao Q."/>
            <person name="Choy N."/>
            <person name="Enju A."/>
            <person name="Goldsmith A.D."/>
            <person name="Gurjal M."/>
            <person name="Hansen N.F."/>
            <person name="Hayashizaki Y."/>
            <person name="Johnson-Hopson C."/>
            <person name="Hsuan V.W."/>
            <person name="Iida K."/>
            <person name="Karnes M."/>
            <person name="Khan S."/>
            <person name="Koesema E."/>
            <person name="Ishida J."/>
            <person name="Jiang P.X."/>
            <person name="Jones T."/>
            <person name="Kawai J."/>
            <person name="Kamiya A."/>
            <person name="Meyers C."/>
            <person name="Nakajima M."/>
            <person name="Narusaka M."/>
            <person name="Seki M."/>
            <person name="Sakurai T."/>
            <person name="Satou M."/>
            <person name="Tamse R."/>
            <person name="Vaysberg M."/>
            <person name="Wallender E.K."/>
            <person name="Wong C."/>
            <person name="Yamamura Y."/>
            <person name="Yuan S."/>
            <person name="Shinozaki K."/>
            <person name="Davis R.W."/>
            <person name="Theologis A."/>
            <person name="Ecker J.R."/>
        </authorList>
    </citation>
    <scope>NUCLEOTIDE SEQUENCE [LARGE SCALE MRNA]</scope>
    <source>
        <strain>cv. Columbia</strain>
    </source>
</reference>
<reference key="4">
    <citation type="submission" date="2002-03" db="EMBL/GenBank/DDBJ databases">
        <title>Full-length cDNA from Arabidopsis thaliana.</title>
        <authorList>
            <person name="Brover V.V."/>
            <person name="Troukhan M.E."/>
            <person name="Alexandrov N.A."/>
            <person name="Lu Y.-P."/>
            <person name="Flavell R.B."/>
            <person name="Feldmann K.A."/>
        </authorList>
    </citation>
    <scope>NUCLEOTIDE SEQUENCE [LARGE SCALE MRNA]</scope>
</reference>
<reference key="5">
    <citation type="journal article" date="2006" name="Proc. Natl. Acad. Sci. U.S.A.">
        <title>An endogenous peptide signal in Arabidopsis activates components of the innate immune response.</title>
        <authorList>
            <person name="Huffaker A."/>
            <person name="Pearce G."/>
            <person name="Ryan C.A."/>
        </authorList>
    </citation>
    <scope>PROTEIN SEQUENCE OF 70-92</scope>
    <scope>FUNCTION</scope>
    <scope>PROTEOLYTIC PROCESSING</scope>
    <scope>IDENTIFICATION BY MASS SPECTROMETRY</scope>
    <scope>GENE FAMILY</scope>
    <scope>NOMENCLATURE</scope>
</reference>
<reference key="6">
    <citation type="journal article" date="2006" name="Proc. Natl. Acad. Sci. U.S.A.">
        <title>The cell surface leucine-rich repeat receptor for AtPep1, an endogenous peptide elicitor in Arabidopsis, is functional in transgenic tobacco cells.</title>
        <authorList>
            <person name="Yamaguchi Y."/>
            <person name="Pearce G."/>
            <person name="Ryan C.A."/>
        </authorList>
    </citation>
    <scope>INTERACTION WITH PEPR1</scope>
</reference>
<reference key="7">
    <citation type="journal article" date="2008" name="Peptides">
        <title>Structure-activity studies of AtPep1, a plant peptide signal involved in the innate immune response.</title>
        <authorList>
            <person name="Pearce G."/>
            <person name="Yamaguchi Y."/>
            <person name="Munske G."/>
            <person name="Ryan C.A."/>
        </authorList>
    </citation>
    <scope>INTERACTION WITH PEPR1</scope>
    <scope>MUTAGENESIS OF ARG-78; GLY-79; LYS-80; GLU-81; LYS-82; VAL-83; SER-84; SER-85; GLY-86; ARG-87; PRO-88; GLY-89; GLN-90; HIS-91 AND ASN-92</scope>
</reference>
<reference key="8">
    <citation type="journal article" date="2019" name="J. Exp. Bot.">
        <title>The SCOOP12 peptide regulates defense response and root elongation in Arabidopsis thaliana.</title>
        <authorList>
            <person name="Gully K."/>
            <person name="Pelletier S."/>
            <person name="Guillou M.-C."/>
            <person name="Ferrand M."/>
            <person name="Aligon S."/>
            <person name="Pokotylo I."/>
            <person name="Perrin A."/>
            <person name="Vergne E."/>
            <person name="Fagard M."/>
            <person name="Ruelland E."/>
            <person name="Grappin P."/>
            <person name="Bucher E."/>
            <person name="Renou J.-P."/>
            <person name="Aubourg S."/>
        </authorList>
    </citation>
    <scope>FUNCTION</scope>
    <source>
        <strain>cv. Columbia</strain>
        <strain>cv. Wassilewskija</strain>
    </source>
</reference>
<protein>
    <recommendedName>
        <fullName evidence="6 7 8">Precursor of elicitor peptide 1</fullName>
    </recommendedName>
    <component>
        <recommendedName>
            <fullName evidence="6 7 8">Elicitor peptide 1</fullName>
            <shortName evidence="6 7 8">AtPep1</shortName>
        </recommendedName>
    </component>
</protein>
<gene>
    <name evidence="6 7 8" type="primary">PROPEP1</name>
    <name evidence="6 7 8" type="synonym">PEP1</name>
    <name evidence="10" type="ordered locus">At5g64900</name>
    <name evidence="11" type="ORF">MXK3.13</name>
</gene>
<dbReference type="EMBL" id="AB019236">
    <property type="protein sequence ID" value="BAA97302.1"/>
    <property type="molecule type" value="Genomic_DNA"/>
</dbReference>
<dbReference type="EMBL" id="CP002688">
    <property type="protein sequence ID" value="AED97966.1"/>
    <property type="molecule type" value="Genomic_DNA"/>
</dbReference>
<dbReference type="EMBL" id="AY062830">
    <property type="protein sequence ID" value="AAL32908.1"/>
    <property type="molecule type" value="mRNA"/>
</dbReference>
<dbReference type="EMBL" id="AY081662">
    <property type="protein sequence ID" value="AAM10224.1"/>
    <property type="molecule type" value="mRNA"/>
</dbReference>
<dbReference type="EMBL" id="AY086540">
    <property type="protein sequence ID" value="AAM63605.1"/>
    <property type="molecule type" value="mRNA"/>
</dbReference>
<dbReference type="RefSeq" id="NP_569001.1">
    <property type="nucleotide sequence ID" value="NM_125888.4"/>
</dbReference>
<dbReference type="PDB" id="5GR8">
    <property type="method" value="X-ray"/>
    <property type="resolution" value="2.59 A"/>
    <property type="chains" value="J/P=76-92"/>
</dbReference>
<dbReference type="PDBsum" id="5GR8"/>
<dbReference type="SMR" id="Q9LV87"/>
<dbReference type="BioGRID" id="21855">
    <property type="interactions" value="1"/>
</dbReference>
<dbReference type="DIP" id="DIP-61206N"/>
<dbReference type="FunCoup" id="Q9LV87">
    <property type="interactions" value="1"/>
</dbReference>
<dbReference type="IntAct" id="Q9LV87">
    <property type="interactions" value="1"/>
</dbReference>
<dbReference type="STRING" id="3702.Q9LV87"/>
<dbReference type="PaxDb" id="3702-AT5G64900.1"/>
<dbReference type="ProteomicsDB" id="236682"/>
<dbReference type="EnsemblPlants" id="AT5G64900.1">
    <property type="protein sequence ID" value="AT5G64900.1"/>
    <property type="gene ID" value="AT5G64900"/>
</dbReference>
<dbReference type="GeneID" id="836613"/>
<dbReference type="Gramene" id="AT5G64900.1">
    <property type="protein sequence ID" value="AT5G64900.1"/>
    <property type="gene ID" value="AT5G64900"/>
</dbReference>
<dbReference type="KEGG" id="ath:AT5G64900"/>
<dbReference type="Araport" id="AT5G64900"/>
<dbReference type="TAIR" id="AT5G64900">
    <property type="gene designation" value="PROPEP1"/>
</dbReference>
<dbReference type="HOGENOM" id="CLU_174284_0_0_1"/>
<dbReference type="InParanoid" id="Q9LV87"/>
<dbReference type="OMA" id="EETYWWM"/>
<dbReference type="PhylomeDB" id="Q9LV87"/>
<dbReference type="PRO" id="PR:Q9LV87"/>
<dbReference type="Proteomes" id="UP000006548">
    <property type="component" value="Chromosome 5"/>
</dbReference>
<dbReference type="ExpressionAtlas" id="Q9LV87">
    <property type="expression patterns" value="baseline and differential"/>
</dbReference>
<dbReference type="GO" id="GO:0045087">
    <property type="term" value="P:innate immune response"/>
    <property type="evidence" value="ECO:0000314"/>
    <property type="project" value="TAIR"/>
</dbReference>
<dbReference type="GO" id="GO:0009723">
    <property type="term" value="P:response to ethylene"/>
    <property type="evidence" value="ECO:0000270"/>
    <property type="project" value="TAIR"/>
</dbReference>
<dbReference type="GO" id="GO:0009753">
    <property type="term" value="P:response to jasmonic acid"/>
    <property type="evidence" value="ECO:0000270"/>
    <property type="project" value="TAIR"/>
</dbReference>
<dbReference type="GO" id="GO:0009611">
    <property type="term" value="P:response to wounding"/>
    <property type="evidence" value="ECO:0000270"/>
    <property type="project" value="TAIR"/>
</dbReference>
<dbReference type="InterPro" id="IPR035176">
    <property type="entry name" value="PEP"/>
</dbReference>
<dbReference type="Pfam" id="PF17232">
    <property type="entry name" value="Pep1_7"/>
    <property type="match status" value="1"/>
</dbReference>
<comment type="function">
    <text evidence="3 5">Elicitor of plant defense. Induces the production of plant defensin (PDF1.2) and of H(2)O(2) (PubMed:16785434). Promotes resistance to the root fungal pathogen P.irregulare (PubMed:16785434). Triggers the expression of several PROSCOOP genes (e.g. PROSCOOP2, PROSCOOP7, PROSCOOP8, PROSCOOP12 and PROSCOOP13) (PubMed:30715439).</text>
</comment>
<comment type="subunit">
    <text evidence="2 4">Interacts with its receptor PEPR1.</text>
</comment>
<comment type="induction">
    <text>By wounding, methyl jasmonate (MeJA), ethylene. The expression of the peptide PEP1 precursor is induced by the mature peptide PEP1.</text>
</comment>
<comment type="similarity">
    <text evidence="9">Belongs to the brassicaceae elicitor peptide family.</text>
</comment>
<accession>Q9LV87</accession>
<accession>Q8LCK9</accession>
<name>PEP1_ARATH</name>
<keyword id="KW-0002">3D-structure</keyword>
<keyword id="KW-0903">Direct protein sequencing</keyword>
<keyword id="KW-0611">Plant defense</keyword>
<keyword id="KW-1185">Reference proteome</keyword>